<organism>
    <name type="scientific">Mycobacterium tuberculosis (strain ATCC 25618 / H37Rv)</name>
    <dbReference type="NCBI Taxonomy" id="83332"/>
    <lineage>
        <taxon>Bacteria</taxon>
        <taxon>Bacillati</taxon>
        <taxon>Actinomycetota</taxon>
        <taxon>Actinomycetes</taxon>
        <taxon>Mycobacteriales</taxon>
        <taxon>Mycobacteriaceae</taxon>
        <taxon>Mycobacterium</taxon>
        <taxon>Mycobacterium tuberculosis complex</taxon>
    </lineage>
</organism>
<feature type="chain" id="PRO_0000052292" description="Putative cytochrome P450 135A1">
    <location>
        <begin position="1"/>
        <end position="449"/>
    </location>
</feature>
<feature type="binding site" description="axial binding residue" evidence="1">
    <location>
        <position position="383"/>
    </location>
    <ligand>
        <name>heme</name>
        <dbReference type="ChEBI" id="CHEBI:30413"/>
    </ligand>
    <ligandPart>
        <name>Fe</name>
        <dbReference type="ChEBI" id="CHEBI:18248"/>
    </ligandPart>
</feature>
<gene>
    <name type="primary">cyp135A1</name>
    <name type="ordered locus">Rv0327c</name>
    <name type="ORF">MTCY63.32c</name>
</gene>
<accession>P9WPN1</accession>
<accession>L0T6C2</accession>
<accession>O08447</accession>
<name>C135A_MYCTU</name>
<comment type="cofactor">
    <cofactor evidence="1">
        <name>heme</name>
        <dbReference type="ChEBI" id="CHEBI:30413"/>
    </cofactor>
</comment>
<comment type="similarity">
    <text evidence="2">Belongs to the cytochrome P450 family.</text>
</comment>
<reference key="1">
    <citation type="journal article" date="1998" name="Nature">
        <title>Deciphering the biology of Mycobacterium tuberculosis from the complete genome sequence.</title>
        <authorList>
            <person name="Cole S.T."/>
            <person name="Brosch R."/>
            <person name="Parkhill J."/>
            <person name="Garnier T."/>
            <person name="Churcher C.M."/>
            <person name="Harris D.E."/>
            <person name="Gordon S.V."/>
            <person name="Eiglmeier K."/>
            <person name="Gas S."/>
            <person name="Barry C.E. III"/>
            <person name="Tekaia F."/>
            <person name="Badcock K."/>
            <person name="Basham D."/>
            <person name="Brown D."/>
            <person name="Chillingworth T."/>
            <person name="Connor R."/>
            <person name="Davies R.M."/>
            <person name="Devlin K."/>
            <person name="Feltwell T."/>
            <person name="Gentles S."/>
            <person name="Hamlin N."/>
            <person name="Holroyd S."/>
            <person name="Hornsby T."/>
            <person name="Jagels K."/>
            <person name="Krogh A."/>
            <person name="McLean J."/>
            <person name="Moule S."/>
            <person name="Murphy L.D."/>
            <person name="Oliver S."/>
            <person name="Osborne J."/>
            <person name="Quail M.A."/>
            <person name="Rajandream M.A."/>
            <person name="Rogers J."/>
            <person name="Rutter S."/>
            <person name="Seeger K."/>
            <person name="Skelton S."/>
            <person name="Squares S."/>
            <person name="Squares R."/>
            <person name="Sulston J.E."/>
            <person name="Taylor K."/>
            <person name="Whitehead S."/>
            <person name="Barrell B.G."/>
        </authorList>
    </citation>
    <scope>NUCLEOTIDE SEQUENCE [LARGE SCALE GENOMIC DNA]</scope>
    <source>
        <strain>ATCC 25618 / H37Rv</strain>
    </source>
</reference>
<reference key="2">
    <citation type="journal article" date="2011" name="Mol. Cell. Proteomics">
        <title>Proteogenomic analysis of Mycobacterium tuberculosis by high resolution mass spectrometry.</title>
        <authorList>
            <person name="Kelkar D.S."/>
            <person name="Kumar D."/>
            <person name="Kumar P."/>
            <person name="Balakrishnan L."/>
            <person name="Muthusamy B."/>
            <person name="Yadav A.K."/>
            <person name="Shrivastava P."/>
            <person name="Marimuthu A."/>
            <person name="Anand S."/>
            <person name="Sundaram H."/>
            <person name="Kingsbury R."/>
            <person name="Harsha H.C."/>
            <person name="Nair B."/>
            <person name="Prasad T.S."/>
            <person name="Chauhan D.S."/>
            <person name="Katoch K."/>
            <person name="Katoch V.M."/>
            <person name="Kumar P."/>
            <person name="Chaerkady R."/>
            <person name="Ramachandran S."/>
            <person name="Dash D."/>
            <person name="Pandey A."/>
        </authorList>
    </citation>
    <scope>IDENTIFICATION BY MASS SPECTROMETRY [LARGE SCALE ANALYSIS]</scope>
    <source>
        <strain>ATCC 25618 / H37Rv</strain>
    </source>
</reference>
<proteinExistence type="evidence at protein level"/>
<dbReference type="EC" id="1.14.-.-"/>
<dbReference type="EMBL" id="AL123456">
    <property type="protein sequence ID" value="CCP43057.1"/>
    <property type="molecule type" value="Genomic_DNA"/>
</dbReference>
<dbReference type="PIR" id="H70526">
    <property type="entry name" value="H70526"/>
</dbReference>
<dbReference type="RefSeq" id="NP_214841.1">
    <property type="nucleotide sequence ID" value="NC_000962.3"/>
</dbReference>
<dbReference type="RefSeq" id="WP_003401650.1">
    <property type="nucleotide sequence ID" value="NZ_NVQJ01000026.1"/>
</dbReference>
<dbReference type="SMR" id="P9WPN1"/>
<dbReference type="FunCoup" id="P9WPN1">
    <property type="interactions" value="51"/>
</dbReference>
<dbReference type="STRING" id="83332.Rv0327c"/>
<dbReference type="PaxDb" id="83332-Rv0327c"/>
<dbReference type="DNASU" id="886538"/>
<dbReference type="GeneID" id="886538"/>
<dbReference type="KEGG" id="mtu:Rv0327c"/>
<dbReference type="KEGG" id="mtv:RVBD_0327c"/>
<dbReference type="TubercuList" id="Rv0327c"/>
<dbReference type="eggNOG" id="COG2124">
    <property type="taxonomic scope" value="Bacteria"/>
</dbReference>
<dbReference type="InParanoid" id="P9WPN1"/>
<dbReference type="OrthoDB" id="7376058at2"/>
<dbReference type="PhylomeDB" id="P9WPN1"/>
<dbReference type="Proteomes" id="UP000001584">
    <property type="component" value="Chromosome"/>
</dbReference>
<dbReference type="GO" id="GO:0009274">
    <property type="term" value="C:peptidoglycan-based cell wall"/>
    <property type="evidence" value="ECO:0007005"/>
    <property type="project" value="MTBBASE"/>
</dbReference>
<dbReference type="GO" id="GO:0020037">
    <property type="term" value="F:heme binding"/>
    <property type="evidence" value="ECO:0007669"/>
    <property type="project" value="InterPro"/>
</dbReference>
<dbReference type="GO" id="GO:0005506">
    <property type="term" value="F:iron ion binding"/>
    <property type="evidence" value="ECO:0007669"/>
    <property type="project" value="InterPro"/>
</dbReference>
<dbReference type="GO" id="GO:0004497">
    <property type="term" value="F:monooxygenase activity"/>
    <property type="evidence" value="ECO:0007669"/>
    <property type="project" value="UniProtKB-KW"/>
</dbReference>
<dbReference type="GO" id="GO:0016491">
    <property type="term" value="F:oxidoreductase activity"/>
    <property type="evidence" value="ECO:0000318"/>
    <property type="project" value="GO_Central"/>
</dbReference>
<dbReference type="GO" id="GO:0016705">
    <property type="term" value="F:oxidoreductase activity, acting on paired donors, with incorporation or reduction of molecular oxygen"/>
    <property type="evidence" value="ECO:0007669"/>
    <property type="project" value="InterPro"/>
</dbReference>
<dbReference type="CDD" id="cd11053">
    <property type="entry name" value="CYP110-like"/>
    <property type="match status" value="1"/>
</dbReference>
<dbReference type="Gene3D" id="1.10.630.10">
    <property type="entry name" value="Cytochrome P450"/>
    <property type="match status" value="1"/>
</dbReference>
<dbReference type="InterPro" id="IPR001128">
    <property type="entry name" value="Cyt_P450"/>
</dbReference>
<dbReference type="InterPro" id="IPR017972">
    <property type="entry name" value="Cyt_P450_CS"/>
</dbReference>
<dbReference type="InterPro" id="IPR002401">
    <property type="entry name" value="Cyt_P450_E_grp-I"/>
</dbReference>
<dbReference type="InterPro" id="IPR036396">
    <property type="entry name" value="Cyt_P450_sf"/>
</dbReference>
<dbReference type="InterPro" id="IPR050121">
    <property type="entry name" value="Cytochrome_P450_monoxygenase"/>
</dbReference>
<dbReference type="PANTHER" id="PTHR24305">
    <property type="entry name" value="CYTOCHROME P450"/>
    <property type="match status" value="1"/>
</dbReference>
<dbReference type="PANTHER" id="PTHR24305:SF166">
    <property type="entry name" value="CYTOCHROME P450 12A4, MITOCHONDRIAL-RELATED"/>
    <property type="match status" value="1"/>
</dbReference>
<dbReference type="Pfam" id="PF00067">
    <property type="entry name" value="p450"/>
    <property type="match status" value="1"/>
</dbReference>
<dbReference type="PRINTS" id="PR00463">
    <property type="entry name" value="EP450I"/>
</dbReference>
<dbReference type="PRINTS" id="PR00385">
    <property type="entry name" value="P450"/>
</dbReference>
<dbReference type="SUPFAM" id="SSF48264">
    <property type="entry name" value="Cytochrome P450"/>
    <property type="match status" value="1"/>
</dbReference>
<dbReference type="PROSITE" id="PS00086">
    <property type="entry name" value="CYTOCHROME_P450"/>
    <property type="match status" value="1"/>
</dbReference>
<sequence>MASTLTTGLPPGPRLPRYLQSVLYLRFREWFLPAMHRKYGDVFSLRVPPYADNLVVYTRPEHIKEIFAADPRSLHAGEGNHILGFVMGEHSVLMTDEAEHARMRSLLMPAFTRAALRGYRDMIASVAREHITRWRPHATINSLDHMNALTLDIILRVVFGVTDPKVKAELTSRLQQIINIHPAILAGVPYPSLKRMNPWKRFFHNQTKIDEILYREIASRRIDSDLTARTDVLSRLLQTKDTPTKPLTDAELRDQLITLLLAGHETTAAALSWTLWELAHAPEIQSQVVWAAVGGDDGFLEAVLKEGMRRHTVIASTARKVTAPAEIGGWRLPAGTVVNTSILLAHASEVSHPKPTEFRPSRFLDGSVAPNTWLPFGGGVRRCLGFGFALTEGAVILQEIFRRFTITAAGPSKGETPLVRNITTVPKHGAHLRLIPQRRLGGLGDSDPP</sequence>
<evidence type="ECO:0000250" key="1"/>
<evidence type="ECO:0000305" key="2"/>
<keyword id="KW-0349">Heme</keyword>
<keyword id="KW-0408">Iron</keyword>
<keyword id="KW-0479">Metal-binding</keyword>
<keyword id="KW-0503">Monooxygenase</keyword>
<keyword id="KW-0560">Oxidoreductase</keyword>
<keyword id="KW-1185">Reference proteome</keyword>
<protein>
    <recommendedName>
        <fullName>Putative cytochrome P450 135A1</fullName>
        <ecNumber>1.14.-.-</ecNumber>
    </recommendedName>
</protein>